<reference key="1">
    <citation type="journal article" date="1994" name="Yeast">
        <title>Sequencing of chromosome I of Saccharomyces cerevisiae: analysis of the 42 kbp SPO7-CENI-CDC15 region.</title>
        <authorList>
            <person name="Clark M.W."/>
            <person name="Keng T."/>
            <person name="Storms R.K."/>
            <person name="Zhong W.-W."/>
            <person name="Fortin N."/>
            <person name="Zeng B."/>
            <person name="Delaney S."/>
            <person name="Ouellette B.F.F."/>
            <person name="Barton A.B."/>
            <person name="Kaback D.B."/>
            <person name="Bussey H."/>
        </authorList>
    </citation>
    <scope>NUCLEOTIDE SEQUENCE [GENOMIC DNA]</scope>
    <source>
        <strain>ATCC 204511 / S288c / AB972</strain>
    </source>
</reference>
<reference key="2">
    <citation type="journal article" date="1995" name="Proc. Natl. Acad. Sci. U.S.A.">
        <title>The nucleotide sequence of chromosome I from Saccharomyces cerevisiae.</title>
        <authorList>
            <person name="Bussey H."/>
            <person name="Kaback D.B."/>
            <person name="Zhong W.-W."/>
            <person name="Vo D.H."/>
            <person name="Clark M.W."/>
            <person name="Fortin N."/>
            <person name="Hall J."/>
            <person name="Ouellette B.F.F."/>
            <person name="Keng T."/>
            <person name="Barton A.B."/>
            <person name="Su Y."/>
            <person name="Davies C.J."/>
            <person name="Storms R.K."/>
        </authorList>
    </citation>
    <scope>NUCLEOTIDE SEQUENCE [LARGE SCALE GENOMIC DNA]</scope>
    <source>
        <strain>ATCC 204508 / S288c</strain>
    </source>
</reference>
<reference key="3">
    <citation type="journal article" date="2014" name="G3 (Bethesda)">
        <title>The reference genome sequence of Saccharomyces cerevisiae: Then and now.</title>
        <authorList>
            <person name="Engel S.R."/>
            <person name="Dietrich F.S."/>
            <person name="Fisk D.G."/>
            <person name="Binkley G."/>
            <person name="Balakrishnan R."/>
            <person name="Costanzo M.C."/>
            <person name="Dwight S.S."/>
            <person name="Hitz B.C."/>
            <person name="Karra K."/>
            <person name="Nash R.S."/>
            <person name="Weng S."/>
            <person name="Wong E.D."/>
            <person name="Lloyd P."/>
            <person name="Skrzypek M.S."/>
            <person name="Miyasato S.R."/>
            <person name="Simison M."/>
            <person name="Cherry J.M."/>
        </authorList>
    </citation>
    <scope>GENOME REANNOTATION</scope>
    <source>
        <strain>ATCC 204508 / S288c</strain>
    </source>
</reference>
<reference key="4">
    <citation type="journal article" date="1998" name="Genome Res.">
        <title>Transposable elements and genome organization: a comprehensive survey of retrotransposons revealed by the complete Saccharomyces cerevisiae genome sequence.</title>
        <authorList>
            <person name="Kim J.M."/>
            <person name="Vanguri S."/>
            <person name="Boeke J.D."/>
            <person name="Gabriel A."/>
            <person name="Voytas D.F."/>
        </authorList>
    </citation>
    <scope>NOMENCLATURE</scope>
</reference>
<reference key="5">
    <citation type="journal article" date="2002" name="Mol. Cell. Biol.">
        <title>Differential effects of chromatin and Gcn4 on the 50-fold range of expression among individual yeast Ty1 retrotransposons.</title>
        <authorList>
            <person name="Morillon A."/>
            <person name="Benard L."/>
            <person name="Springer M."/>
            <person name="Lesage P."/>
        </authorList>
    </citation>
    <scope>INDUCTION</scope>
</reference>
<reference key="6">
    <citation type="journal article" date="2005" name="Cytogenet. Genome Res.">
        <title>Happy together: the life and times of Ty retrotransposons and their hosts.</title>
        <authorList>
            <person name="Lesage P."/>
            <person name="Todeschini A.L."/>
        </authorList>
    </citation>
    <scope>REVIEW</scope>
</reference>
<dbReference type="EMBL" id="L22015">
    <property type="protein sequence ID" value="AAC04966.1"/>
    <property type="molecule type" value="Genomic_DNA"/>
</dbReference>
<dbReference type="EMBL" id="BK006935">
    <property type="protein sequence ID" value="DAA06992.1"/>
    <property type="molecule type" value="Genomic_DNA"/>
</dbReference>
<dbReference type="PIR" id="S40909">
    <property type="entry name" value="S40909"/>
</dbReference>
<dbReference type="RefSeq" id="NP_009407.1">
    <property type="nucleotide sequence ID" value="NM_001178214.1"/>
</dbReference>
<dbReference type="RefSeq" id="NP_058192.1">
    <property type="nucleotide sequence ID" value="NM_001184393.1"/>
</dbReference>
<dbReference type="SMR" id="P0CX57"/>
<dbReference type="BioGRID" id="31796">
    <property type="interactions" value="24"/>
</dbReference>
<dbReference type="BioGRID" id="36305">
    <property type="interactions" value="20"/>
</dbReference>
<dbReference type="FunCoup" id="P0CX57">
    <property type="interactions" value="194"/>
</dbReference>
<dbReference type="GlyGen" id="P0CX57">
    <property type="glycosylation" value="2 sites"/>
</dbReference>
<dbReference type="PaxDb" id="4932-YAR010C"/>
<dbReference type="PeptideAtlas" id="P0CX57"/>
<dbReference type="ABCD" id="P0CX57">
    <property type="antibodies" value="1 sequenced antibody"/>
</dbReference>
<dbReference type="GeneID" id="851269"/>
<dbReference type="KEGG" id="sce:YAR010C"/>
<dbReference type="KEGG" id="sce:YPR137C-A"/>
<dbReference type="AGR" id="SGD:S000000068"/>
<dbReference type="SGD" id="S000000068">
    <property type="gene designation" value="YAR010C"/>
</dbReference>
<dbReference type="VEuPathDB" id="FungiDB:YAR010C"/>
<dbReference type="VEuPathDB" id="FungiDB:YPR137C-A"/>
<dbReference type="eggNOG" id="KOG0017">
    <property type="taxonomic scope" value="Eukaryota"/>
</dbReference>
<dbReference type="HOGENOM" id="CLU_045291_1_0_1"/>
<dbReference type="InParanoid" id="P0CX57"/>
<dbReference type="OrthoDB" id="5423336at2759"/>
<dbReference type="PRO" id="PR:P0CX57"/>
<dbReference type="Proteomes" id="UP000002311">
    <property type="component" value="Chromosome I"/>
</dbReference>
<dbReference type="RNAct" id="P0CX57">
    <property type="molecule type" value="protein"/>
</dbReference>
<dbReference type="GO" id="GO:0005737">
    <property type="term" value="C:cytoplasm"/>
    <property type="evidence" value="ECO:0007669"/>
    <property type="project" value="UniProtKB-SubCell"/>
</dbReference>
<dbReference type="GO" id="GO:0003723">
    <property type="term" value="F:RNA binding"/>
    <property type="evidence" value="ECO:0007669"/>
    <property type="project" value="UniProtKB-KW"/>
</dbReference>
<dbReference type="InterPro" id="IPR015820">
    <property type="entry name" value="TYA"/>
</dbReference>
<dbReference type="Pfam" id="PF01021">
    <property type="entry name" value="TYA"/>
    <property type="match status" value="1"/>
</dbReference>
<protein>
    <recommendedName>
        <fullName>Transposon Ty1-A Gag polyprotein</fullName>
    </recommendedName>
    <alternativeName>
        <fullName>Gag-p49</fullName>
    </alternativeName>
    <alternativeName>
        <fullName>Transposon Ty1 protein A</fullName>
        <shortName>TY1A</shortName>
        <shortName>TYA</shortName>
    </alternativeName>
    <alternativeName>
        <fullName>p58</fullName>
    </alternativeName>
    <component>
        <recommendedName>
            <fullName>Capsid protein</fullName>
            <shortName>CA</shortName>
        </recommendedName>
        <alternativeName>
            <fullName>Gag-p45</fullName>
        </alternativeName>
        <alternativeName>
            <fullName>p54</fullName>
        </alternativeName>
    </component>
    <component>
        <recommendedName>
            <fullName>Gag-p4</fullName>
        </recommendedName>
    </component>
</protein>
<feature type="chain" id="PRO_0000278982" description="Transposon Ty1-A Gag polyprotein">
    <location>
        <begin position="1"/>
        <end position="440"/>
    </location>
</feature>
<feature type="chain" id="PRO_0000278983" description="Capsid protein" evidence="1">
    <location>
        <begin position="1"/>
        <end position="401"/>
    </location>
</feature>
<feature type="peptide" id="PRO_0000278984" description="Gag-p4" evidence="1">
    <location>
        <begin position="402"/>
        <end position="440"/>
    </location>
</feature>
<feature type="region of interest" description="Disordered" evidence="3">
    <location>
        <begin position="1"/>
        <end position="93"/>
    </location>
</feature>
<feature type="region of interest" description="Disordered" evidence="3">
    <location>
        <begin position="126"/>
        <end position="173"/>
    </location>
</feature>
<feature type="region of interest" description="RNA-binding" evidence="1">
    <location>
        <begin position="299"/>
        <end position="401"/>
    </location>
</feature>
<feature type="region of interest" description="Disordered" evidence="3">
    <location>
        <begin position="352"/>
        <end position="440"/>
    </location>
</feature>
<feature type="compositionally biased region" description="Polar residues" evidence="3">
    <location>
        <begin position="1"/>
        <end position="23"/>
    </location>
</feature>
<feature type="compositionally biased region" description="Polar residues" evidence="3">
    <location>
        <begin position="48"/>
        <end position="60"/>
    </location>
</feature>
<feature type="compositionally biased region" description="Polar residues" evidence="3">
    <location>
        <begin position="71"/>
        <end position="93"/>
    </location>
</feature>
<feature type="compositionally biased region" description="Polar residues" evidence="3">
    <location>
        <begin position="127"/>
        <end position="152"/>
    </location>
</feature>
<feature type="compositionally biased region" description="Low complexity" evidence="3">
    <location>
        <begin position="153"/>
        <end position="165"/>
    </location>
</feature>
<feature type="compositionally biased region" description="Low complexity" evidence="3">
    <location>
        <begin position="402"/>
        <end position="418"/>
    </location>
</feature>
<feature type="compositionally biased region" description="Polar residues" evidence="3">
    <location>
        <begin position="419"/>
        <end position="428"/>
    </location>
</feature>
<feature type="compositionally biased region" description="Basic and acidic residues" evidence="3">
    <location>
        <begin position="429"/>
        <end position="440"/>
    </location>
</feature>
<feature type="site" description="Cleavage; by Ty1 protease" evidence="1">
    <location>
        <begin position="401"/>
        <end position="402"/>
    </location>
</feature>
<feature type="modified residue" description="Phosphoserine" evidence="2">
    <location>
        <position position="416"/>
    </location>
</feature>
<organism>
    <name type="scientific">Saccharomyces cerevisiae (strain ATCC 204508 / S288c)</name>
    <name type="common">Baker's yeast</name>
    <dbReference type="NCBI Taxonomy" id="559292"/>
    <lineage>
        <taxon>Eukaryota</taxon>
        <taxon>Fungi</taxon>
        <taxon>Dikarya</taxon>
        <taxon>Ascomycota</taxon>
        <taxon>Saccharomycotina</taxon>
        <taxon>Saccharomycetes</taxon>
        <taxon>Saccharomycetales</taxon>
        <taxon>Saccharomycetaceae</taxon>
        <taxon>Saccharomyces</taxon>
    </lineage>
</organism>
<comment type="function">
    <text evidence="1">Capsid protein (CA) is the structural component of the virus-like particle (VLP), forming the shell that encapsulates the retrotransposons dimeric RNA genome. The particles are assembled from trimer-clustered units and there are holes in the capsid shells that allow for the diffusion of macromolecules. CA also has nucleocapsid-like chaperone activity, promoting primer tRNA(i)-Met annealing to the multipartite primer-binding site (PBS), dimerization of Ty1 RNA and initiation of reverse transcription (By similarity).</text>
</comment>
<comment type="subunit">
    <text evidence="1">Homotrimer.</text>
</comment>
<comment type="subcellular location">
    <subcellularLocation>
        <location evidence="1">Cytoplasm</location>
    </subcellularLocation>
</comment>
<comment type="induction">
    <text evidence="4">Ty1-A is a weakly expressed element. Induced under amino acid starvation conditions by GCN4.</text>
</comment>
<comment type="domain">
    <text evidence="1">The C-terminal RNA-binding region of CA is sufficient for all its nucleocapsid-like chaperone activities.</text>
</comment>
<comment type="miscellaneous">
    <text>Retrotransposons are mobile genetic entities that are able to replicate via an RNA intermediate and a reverse transcription step. In contrast to retroviruses, retrotransposons are non-infectious, lack an envelope and remain intracellular. Ty1 retrotransposons belong to the copia elements (pseudoviridae).</text>
</comment>
<comment type="caution">
    <text evidence="5">Transposon Ty1-A (YARCTy1-1) contains a frameshift at position 610, which disrupts the ORF coding for protein TY1B.</text>
</comment>
<gene>
    <name type="primary">TY1A-A</name>
    <name type="synonym">YARCTy1-1 GAG</name>
    <name type="ordered locus">YAR010C</name>
    <name type="ORF">P9659.6d</name>
</gene>
<sequence>MESQQLSQHSPISHGSACASVTSKEVHTNQDPLDVSASKTEECEKASTKANSQQTTTPASSAVPENPHHASPQTAQSHSPQNGPYPQQCMMTQNQANPSGWSFYGHPSMIPYTPYQMSPMYFPPGPQSQFPQYPSSVGTPLSTPSPESGNTFTDSSSADSDMTSTKKYVRPPPMLTSPNDFPNWVKTYIKFLQNSNLGGIIPTVNGKPVRQITDDELTFLYNTFQIFAPSQFLPTWVKDILSVDYTDIMKILSKSIEKMQSDTQEANDIVTLANLQYNGSTPADAFETKVTNIIDRLNNNGIHINNKVACQLIMRGLSGEYKFLRYTRHRHLNMTVAELFLDIHAIYEEQQGSRNSKPNYRRNPSDEKNDSRSYTNTTKPKVIARNPQKTNNSKSKTARAHNVSTSNNSPSTDNDSISKSTTEPIQLNNKHDLHLRPETY</sequence>
<accession>P0CX57</accession>
<accession>D6VPM2</accession>
<accession>O13528</accession>
<keyword id="KW-0963">Cytoplasm</keyword>
<keyword id="KW-0597">Phosphoprotein</keyword>
<keyword id="KW-1185">Reference proteome</keyword>
<keyword id="KW-0694">RNA-binding</keyword>
<keyword id="KW-0814">Transposable element</keyword>
<proteinExistence type="evidence at transcript level"/>
<name>YA11A_YEAST</name>
<evidence type="ECO:0000250" key="1"/>
<evidence type="ECO:0000250" key="2">
    <source>
        <dbReference type="UniProtKB" id="Q12441"/>
    </source>
</evidence>
<evidence type="ECO:0000256" key="3">
    <source>
        <dbReference type="SAM" id="MobiDB-lite"/>
    </source>
</evidence>
<evidence type="ECO:0000269" key="4">
    <source>
    </source>
</evidence>
<evidence type="ECO:0000305" key="5"/>